<sequence length="318" mass="32502">MKIKQAIDKIPGGLMLVPLFLGALCNTFTPGAGKYLGSFSNGLITGTIPILAVWFFCMGASIELKATGTMLKKSGVLVITKLATAWVVALIAGTFLPGDGIQNGLLAGISVLALVAAMDMTNGGLYAALMNQYGSKEEAGAFVLMSLESGPLMTMVILGASGIATFEPQLFVGAVLPFLIGFTLGNLDPDLRKLFGNSVQTLIPFFAFALGNTINLAVILQTGFAGIFLGVLVIVVTGIPLIIADKFIGGGNGTAGVAASSSAGAAVATPLLIANMAPEFAPVAQQATALVATSVIVTSVLVPVITALWAKRFSPKHA</sequence>
<proteinExistence type="inferred from homology"/>
<reference key="1">
    <citation type="submission" date="2009-07" db="EMBL/GenBank/DDBJ databases">
        <title>Complete sequence of Pectobacterium carotovorum subsp. carotovorum PC1.</title>
        <authorList>
            <consortium name="US DOE Joint Genome Institute"/>
            <person name="Lucas S."/>
            <person name="Copeland A."/>
            <person name="Lapidus A."/>
            <person name="Glavina del Rio T."/>
            <person name="Tice H."/>
            <person name="Bruce D."/>
            <person name="Goodwin L."/>
            <person name="Pitluck S."/>
            <person name="Munk A.C."/>
            <person name="Brettin T."/>
            <person name="Detter J.C."/>
            <person name="Han C."/>
            <person name="Tapia R."/>
            <person name="Larimer F."/>
            <person name="Land M."/>
            <person name="Hauser L."/>
            <person name="Kyrpides N."/>
            <person name="Mikhailova N."/>
            <person name="Balakrishnan V."/>
            <person name="Glasner J."/>
            <person name="Perna N.T."/>
        </authorList>
    </citation>
    <scope>NUCLEOTIDE SEQUENCE [LARGE SCALE GENOMIC DNA]</scope>
    <source>
        <strain>PC1</strain>
    </source>
</reference>
<gene>
    <name evidence="1" type="primary">kdgT</name>
    <name type="ordered locus">PC1_3914</name>
</gene>
<keyword id="KW-0997">Cell inner membrane</keyword>
<keyword id="KW-1003">Cell membrane</keyword>
<keyword id="KW-0472">Membrane</keyword>
<keyword id="KW-0762">Sugar transport</keyword>
<keyword id="KW-0769">Symport</keyword>
<keyword id="KW-0812">Transmembrane</keyword>
<keyword id="KW-1133">Transmembrane helix</keyword>
<keyword id="KW-0813">Transport</keyword>
<comment type="function">
    <text evidence="1">Catalyzes the proton-dependent uptake of 2-keto-3-deoxygluconate (KDG) into the cell.</text>
</comment>
<comment type="catalytic activity">
    <reaction evidence="1">
        <text>2-dehydro-3-deoxy-D-gluconate(in) + H(+)(in) = 2-dehydro-3-deoxy-D-gluconate(out) + H(+)(out)</text>
        <dbReference type="Rhea" id="RHEA:29943"/>
        <dbReference type="ChEBI" id="CHEBI:15378"/>
        <dbReference type="ChEBI" id="CHEBI:57990"/>
    </reaction>
    <physiologicalReaction direction="right-to-left" evidence="1">
        <dbReference type="Rhea" id="RHEA:29945"/>
    </physiologicalReaction>
</comment>
<comment type="subcellular location">
    <subcellularLocation>
        <location evidence="1">Cell inner membrane</location>
        <topology evidence="1">Multi-pass membrane protein</topology>
    </subcellularLocation>
</comment>
<comment type="similarity">
    <text evidence="1">Belongs to the KdgT transporter family.</text>
</comment>
<protein>
    <recommendedName>
        <fullName evidence="1">2-keto-3-deoxygluconate permease</fullName>
        <shortName evidence="1">KDG permease</shortName>
    </recommendedName>
</protein>
<accession>C6DGG6</accession>
<organism>
    <name type="scientific">Pectobacterium carotovorum subsp. carotovorum (strain PC1)</name>
    <dbReference type="NCBI Taxonomy" id="561230"/>
    <lineage>
        <taxon>Bacteria</taxon>
        <taxon>Pseudomonadati</taxon>
        <taxon>Pseudomonadota</taxon>
        <taxon>Gammaproteobacteria</taxon>
        <taxon>Enterobacterales</taxon>
        <taxon>Pectobacteriaceae</taxon>
        <taxon>Pectobacterium</taxon>
    </lineage>
</organism>
<feature type="chain" id="PRO_1000202442" description="2-keto-3-deoxygluconate permease">
    <location>
        <begin position="1"/>
        <end position="318"/>
    </location>
</feature>
<feature type="transmembrane region" description="Helical" evidence="1">
    <location>
        <begin position="10"/>
        <end position="30"/>
    </location>
</feature>
<feature type="transmembrane region" description="Helical" evidence="1">
    <location>
        <begin position="42"/>
        <end position="62"/>
    </location>
</feature>
<feature type="transmembrane region" description="Helical" evidence="1">
    <location>
        <begin position="76"/>
        <end position="96"/>
    </location>
</feature>
<feature type="transmembrane region" description="Helical" evidence="1">
    <location>
        <begin position="105"/>
        <end position="125"/>
    </location>
</feature>
<feature type="transmembrane region" description="Helical" evidence="1">
    <location>
        <begin position="139"/>
        <end position="159"/>
    </location>
</feature>
<feature type="transmembrane region" description="Helical" evidence="1">
    <location>
        <begin position="162"/>
        <end position="182"/>
    </location>
</feature>
<feature type="transmembrane region" description="Helical" evidence="1">
    <location>
        <begin position="199"/>
        <end position="219"/>
    </location>
</feature>
<feature type="transmembrane region" description="Helical" evidence="1">
    <location>
        <begin position="224"/>
        <end position="244"/>
    </location>
</feature>
<feature type="transmembrane region" description="Helical" evidence="1">
    <location>
        <begin position="263"/>
        <end position="283"/>
    </location>
</feature>
<feature type="transmembrane region" description="Helical" evidence="1">
    <location>
        <begin position="289"/>
        <end position="309"/>
    </location>
</feature>
<dbReference type="EMBL" id="CP001657">
    <property type="protein sequence ID" value="ACT14929.1"/>
    <property type="molecule type" value="Genomic_DNA"/>
</dbReference>
<dbReference type="RefSeq" id="WP_015842011.1">
    <property type="nucleotide sequence ID" value="NC_012917.1"/>
</dbReference>
<dbReference type="STRING" id="561230.PC1_3914"/>
<dbReference type="KEGG" id="pct:PC1_3914"/>
<dbReference type="eggNOG" id="ENOG502Z7JT">
    <property type="taxonomic scope" value="Bacteria"/>
</dbReference>
<dbReference type="HOGENOM" id="CLU_057476_0_1_6"/>
<dbReference type="OrthoDB" id="3185611at2"/>
<dbReference type="Proteomes" id="UP000002736">
    <property type="component" value="Chromosome"/>
</dbReference>
<dbReference type="GO" id="GO:0005886">
    <property type="term" value="C:plasma membrane"/>
    <property type="evidence" value="ECO:0007669"/>
    <property type="project" value="UniProtKB-SubCell"/>
</dbReference>
<dbReference type="GO" id="GO:0015649">
    <property type="term" value="F:2-keto-3-deoxygluconate:proton symporter activity"/>
    <property type="evidence" value="ECO:0007669"/>
    <property type="project" value="UniProtKB-UniRule"/>
</dbReference>
<dbReference type="HAMAP" id="MF_00070">
    <property type="entry name" value="KdgT"/>
    <property type="match status" value="1"/>
</dbReference>
<dbReference type="InterPro" id="IPR004684">
    <property type="entry name" value="2keto-3dGluconate_permease"/>
</dbReference>
<dbReference type="InterPro" id="IPR018395">
    <property type="entry name" value="2keto-3dGluconate_permease_sub"/>
</dbReference>
<dbReference type="NCBIfam" id="TIGR00793">
    <property type="entry name" value="kdgT"/>
    <property type="match status" value="1"/>
</dbReference>
<dbReference type="Pfam" id="PF03812">
    <property type="entry name" value="KdgT"/>
    <property type="match status" value="1"/>
</dbReference>
<name>KDGT_PECCP</name>
<evidence type="ECO:0000255" key="1">
    <source>
        <dbReference type="HAMAP-Rule" id="MF_00070"/>
    </source>
</evidence>